<protein>
    <recommendedName>
        <fullName>Protein ATC1/LIC4</fullName>
    </recommendedName>
</protein>
<sequence>MLSSSDSKVEPALKKQKYQDKAIDLDKSEEFDKFFLDFNQNQIYQNNSRDLGEQYEPPSNAEPNDLNEEINKALSTFNEFNQTNSIKLSFKNEANSSATESSSPMDSPGTLTSSVTSNDEEVYADDSKQNPSHRISNVQSNSDDQASMTNMVNQSTLTSIKQSMINTSKLISTFTTLKTTYLKLCKEFNYLLNKFKDNEKIKIELINENNELKHLLMEIIKQRELEKSTTRHTTPISNSRKRKCPSS</sequence>
<proteinExistence type="inferred from homology"/>
<dbReference type="EMBL" id="CR382139">
    <property type="protein sequence ID" value="CAG90742.2"/>
    <property type="molecule type" value="Genomic_DNA"/>
</dbReference>
<dbReference type="RefSeq" id="XP_462246.2">
    <property type="nucleotide sequence ID" value="XM_462246.1"/>
</dbReference>
<dbReference type="SMR" id="Q6BHS5"/>
<dbReference type="FunCoup" id="Q6BHS5">
    <property type="interactions" value="93"/>
</dbReference>
<dbReference type="STRING" id="284592.Q6BHS5"/>
<dbReference type="GeneID" id="2905170"/>
<dbReference type="KEGG" id="dha:DEHA2G16126g"/>
<dbReference type="VEuPathDB" id="FungiDB:DEHA2G16126g"/>
<dbReference type="eggNOG" id="ENOG502T57P">
    <property type="taxonomic scope" value="Eukaryota"/>
</dbReference>
<dbReference type="HOGENOM" id="CLU_1124495_0_0_1"/>
<dbReference type="InParanoid" id="Q6BHS5"/>
<dbReference type="OMA" id="DDQASMT"/>
<dbReference type="OrthoDB" id="4088185at2759"/>
<dbReference type="Proteomes" id="UP000000599">
    <property type="component" value="Chromosome G"/>
</dbReference>
<dbReference type="GO" id="GO:0005737">
    <property type="term" value="C:cytoplasm"/>
    <property type="evidence" value="ECO:0007669"/>
    <property type="project" value="UniProtKB-SubCell"/>
</dbReference>
<dbReference type="GO" id="GO:0005634">
    <property type="term" value="C:nucleus"/>
    <property type="evidence" value="ECO:0007669"/>
    <property type="project" value="UniProtKB-SubCell"/>
</dbReference>
<name>LIC4_DEBHA</name>
<organism>
    <name type="scientific">Debaryomyces hansenii (strain ATCC 36239 / CBS 767 / BCRC 21394 / JCM 1990 / NBRC 0083 / IGC 2968)</name>
    <name type="common">Yeast</name>
    <name type="synonym">Torulaspora hansenii</name>
    <dbReference type="NCBI Taxonomy" id="284592"/>
    <lineage>
        <taxon>Eukaryota</taxon>
        <taxon>Fungi</taxon>
        <taxon>Dikarya</taxon>
        <taxon>Ascomycota</taxon>
        <taxon>Saccharomycotina</taxon>
        <taxon>Pichiomycetes</taxon>
        <taxon>Debaryomycetaceae</taxon>
        <taxon>Debaryomyces</taxon>
    </lineage>
</organism>
<feature type="chain" id="PRO_0000076237" description="Protein ATC1/LIC4">
    <location>
        <begin position="1"/>
        <end position="247"/>
    </location>
</feature>
<feature type="region of interest" description="Disordered" evidence="2">
    <location>
        <begin position="95"/>
        <end position="146"/>
    </location>
</feature>
<feature type="region of interest" description="Disordered" evidence="2">
    <location>
        <begin position="226"/>
        <end position="247"/>
    </location>
</feature>
<feature type="compositionally biased region" description="Polar residues" evidence="2">
    <location>
        <begin position="129"/>
        <end position="146"/>
    </location>
</feature>
<accession>Q6BHS5</accession>
<reference key="1">
    <citation type="journal article" date="2004" name="Nature">
        <title>Genome evolution in yeasts.</title>
        <authorList>
            <person name="Dujon B."/>
            <person name="Sherman D."/>
            <person name="Fischer G."/>
            <person name="Durrens P."/>
            <person name="Casaregola S."/>
            <person name="Lafontaine I."/>
            <person name="de Montigny J."/>
            <person name="Marck C."/>
            <person name="Neuveglise C."/>
            <person name="Talla E."/>
            <person name="Goffard N."/>
            <person name="Frangeul L."/>
            <person name="Aigle M."/>
            <person name="Anthouard V."/>
            <person name="Babour A."/>
            <person name="Barbe V."/>
            <person name="Barnay S."/>
            <person name="Blanchin S."/>
            <person name="Beckerich J.-M."/>
            <person name="Beyne E."/>
            <person name="Bleykasten C."/>
            <person name="Boisrame A."/>
            <person name="Boyer J."/>
            <person name="Cattolico L."/>
            <person name="Confanioleri F."/>
            <person name="de Daruvar A."/>
            <person name="Despons L."/>
            <person name="Fabre E."/>
            <person name="Fairhead C."/>
            <person name="Ferry-Dumazet H."/>
            <person name="Groppi A."/>
            <person name="Hantraye F."/>
            <person name="Hennequin C."/>
            <person name="Jauniaux N."/>
            <person name="Joyet P."/>
            <person name="Kachouri R."/>
            <person name="Kerrest A."/>
            <person name="Koszul R."/>
            <person name="Lemaire M."/>
            <person name="Lesur I."/>
            <person name="Ma L."/>
            <person name="Muller H."/>
            <person name="Nicaud J.-M."/>
            <person name="Nikolski M."/>
            <person name="Oztas S."/>
            <person name="Ozier-Kalogeropoulos O."/>
            <person name="Pellenz S."/>
            <person name="Potier S."/>
            <person name="Richard G.-F."/>
            <person name="Straub M.-L."/>
            <person name="Suleau A."/>
            <person name="Swennen D."/>
            <person name="Tekaia F."/>
            <person name="Wesolowski-Louvel M."/>
            <person name="Westhof E."/>
            <person name="Wirth B."/>
            <person name="Zeniou-Meyer M."/>
            <person name="Zivanovic Y."/>
            <person name="Bolotin-Fukuhara M."/>
            <person name="Thierry A."/>
            <person name="Bouchier C."/>
            <person name="Caudron B."/>
            <person name="Scarpelli C."/>
            <person name="Gaillardin C."/>
            <person name="Weissenbach J."/>
            <person name="Wincker P."/>
            <person name="Souciet J.-L."/>
        </authorList>
    </citation>
    <scope>NUCLEOTIDE SEQUENCE [LARGE SCALE GENOMIC DNA]</scope>
    <source>
        <strain>ATCC 36239 / CBS 767 / BCRC 21394 / JCM 1990 / NBRC 0083 / IGC 2968</strain>
    </source>
</reference>
<comment type="function">
    <text evidence="1">Involved in cation homeostasis and in the regulation of the cation stress signaling cascades.</text>
</comment>
<comment type="subcellular location">
    <subcellularLocation>
        <location evidence="1">Cytoplasm</location>
    </subcellularLocation>
    <subcellularLocation>
        <location evidence="1">Nucleus</location>
    </subcellularLocation>
</comment>
<keyword id="KW-0963">Cytoplasm</keyword>
<keyword id="KW-0539">Nucleus</keyword>
<keyword id="KW-1185">Reference proteome</keyword>
<evidence type="ECO:0000250" key="1"/>
<evidence type="ECO:0000256" key="2">
    <source>
        <dbReference type="SAM" id="MobiDB-lite"/>
    </source>
</evidence>
<gene>
    <name type="primary">ATC1</name>
    <name type="ordered locus">DEHA2G16126g</name>
</gene>